<dbReference type="EMBL" id="CR936503">
    <property type="protein sequence ID" value="CAI55333.1"/>
    <property type="status" value="ALT_INIT"/>
    <property type="molecule type" value="Genomic_DNA"/>
</dbReference>
<dbReference type="RefSeq" id="WP_041820846.1">
    <property type="nucleotide sequence ID" value="NC_007576.1"/>
</dbReference>
<dbReference type="STRING" id="314315.LCA_1031"/>
<dbReference type="KEGG" id="lsa:LCA_1031"/>
<dbReference type="eggNOG" id="COG2707">
    <property type="taxonomic scope" value="Bacteria"/>
</dbReference>
<dbReference type="HOGENOM" id="CLU_125889_1_0_9"/>
<dbReference type="OrthoDB" id="80306at2"/>
<dbReference type="Proteomes" id="UP000002707">
    <property type="component" value="Chromosome"/>
</dbReference>
<dbReference type="GO" id="GO:0005886">
    <property type="term" value="C:plasma membrane"/>
    <property type="evidence" value="ECO:0007669"/>
    <property type="project" value="UniProtKB-SubCell"/>
</dbReference>
<dbReference type="HAMAP" id="MF_01874">
    <property type="entry name" value="UPF0756"/>
    <property type="match status" value="1"/>
</dbReference>
<dbReference type="InterPro" id="IPR007382">
    <property type="entry name" value="UPF0756_TM"/>
</dbReference>
<dbReference type="PANTHER" id="PTHR38452">
    <property type="entry name" value="UPF0756 MEMBRANE PROTEIN YEAL"/>
    <property type="match status" value="1"/>
</dbReference>
<dbReference type="PANTHER" id="PTHR38452:SF1">
    <property type="entry name" value="UPF0756 MEMBRANE PROTEIN YEAL"/>
    <property type="match status" value="1"/>
</dbReference>
<dbReference type="Pfam" id="PF04284">
    <property type="entry name" value="DUF441"/>
    <property type="match status" value="1"/>
</dbReference>
<keyword id="KW-1003">Cell membrane</keyword>
<keyword id="KW-0472">Membrane</keyword>
<keyword id="KW-1185">Reference proteome</keyword>
<keyword id="KW-0812">Transmembrane</keyword>
<keyword id="KW-1133">Transmembrane helix</keyword>
<protein>
    <recommendedName>
        <fullName evidence="1">UPF0756 membrane protein LCA_1031</fullName>
    </recommendedName>
</protein>
<evidence type="ECO:0000255" key="1">
    <source>
        <dbReference type="HAMAP-Rule" id="MF_01874"/>
    </source>
</evidence>
<evidence type="ECO:0000305" key="2"/>
<evidence type="ECO:0000312" key="3">
    <source>
        <dbReference type="EMBL" id="CAI55333.1"/>
    </source>
</evidence>
<gene>
    <name evidence="3" type="ordered locus">LCA_1031</name>
    <name evidence="3" type="ORF">LSA1031</name>
</gene>
<comment type="subcellular location">
    <subcellularLocation>
        <location evidence="1">Cell membrane</location>
        <topology evidence="1">Multi-pass membrane protein</topology>
    </subcellularLocation>
</comment>
<comment type="similarity">
    <text evidence="1">Belongs to the UPF0756 family.</text>
</comment>
<comment type="sequence caution" evidence="2">
    <conflict type="erroneous initiation">
        <sequence resource="EMBL-CDS" id="CAI55333"/>
    </conflict>
</comment>
<sequence length="153" mass="15656">MESWLFLAAILIVALLAKNQSLIIATAVVLVLKALPISEKVLPVIQAKGINWGVTVISVAILVPIATGQIGFKELISAFKTPAGFIAVGCGVLVAVLSAKGVGLLAASPEMTVALVFGTIMGVVFLKGIAAGPVIAAGITYTILTIFNLVPIH</sequence>
<organism>
    <name type="scientific">Latilactobacillus sakei subsp. sakei (strain 23K)</name>
    <name type="common">Lactobacillus sakei subsp. sakei</name>
    <dbReference type="NCBI Taxonomy" id="314315"/>
    <lineage>
        <taxon>Bacteria</taxon>
        <taxon>Bacillati</taxon>
        <taxon>Bacillota</taxon>
        <taxon>Bacilli</taxon>
        <taxon>Lactobacillales</taxon>
        <taxon>Lactobacillaceae</taxon>
        <taxon>Latilactobacillus</taxon>
    </lineage>
</organism>
<name>Y1031_LATSS</name>
<feature type="chain" id="PRO_0000388898" description="UPF0756 membrane protein LCA_1031">
    <location>
        <begin position="1"/>
        <end position="153"/>
    </location>
</feature>
<feature type="transmembrane region" description="Helical" evidence="1">
    <location>
        <begin position="4"/>
        <end position="24"/>
    </location>
</feature>
<feature type="transmembrane region" description="Helical" evidence="1">
    <location>
        <begin position="52"/>
        <end position="72"/>
    </location>
</feature>
<feature type="transmembrane region" description="Helical" evidence="1">
    <location>
        <begin position="85"/>
        <end position="105"/>
    </location>
</feature>
<feature type="transmembrane region" description="Helical" evidence="1">
    <location>
        <begin position="115"/>
        <end position="135"/>
    </location>
</feature>
<reference key="1">
    <citation type="journal article" date="2005" name="Nat. Biotechnol.">
        <title>The complete genome sequence of the meat-borne lactic acid bacterium Lactobacillus sakei 23K.</title>
        <authorList>
            <person name="Chaillou S."/>
            <person name="Champomier-Verges M.-C."/>
            <person name="Cornet M."/>
            <person name="Crutz-Le Coq A.-M."/>
            <person name="Dudez A.-M."/>
            <person name="Martin V."/>
            <person name="Beaufils S."/>
            <person name="Darbon-Rongere E."/>
            <person name="Bossy R."/>
            <person name="Loux V."/>
            <person name="Zagorec M."/>
        </authorList>
    </citation>
    <scope>NUCLEOTIDE SEQUENCE [LARGE SCALE GENOMIC DNA]</scope>
    <source>
        <strain>23K</strain>
    </source>
</reference>
<accession>Q38WU8</accession>
<proteinExistence type="inferred from homology"/>